<dbReference type="EMBL" id="AY509253">
    <property type="protein sequence ID" value="AAS00952.1"/>
    <property type="molecule type" value="Genomic_DNA"/>
</dbReference>
<dbReference type="RefSeq" id="YP_024605.1">
    <property type="nucleotide sequence ID" value="NC_005881.2"/>
</dbReference>
<dbReference type="KEGG" id="vg:2948214"/>
<dbReference type="Proteomes" id="UP000007021">
    <property type="component" value="Segment"/>
</dbReference>
<dbReference type="InterPro" id="IPR019039">
    <property type="entry name" value="T4-Rnl1-like_N"/>
</dbReference>
<dbReference type="Pfam" id="PF09511">
    <property type="entry name" value="RNA_lig_T4_1"/>
    <property type="match status" value="1"/>
</dbReference>
<organism>
    <name type="scientific">Ostreid herpesvirus 1 (isolate France)</name>
    <name type="common">OsHV-1</name>
    <name type="synonym">Pacific oyster herpesvirus</name>
    <dbReference type="NCBI Taxonomy" id="654903"/>
    <lineage>
        <taxon>Viruses</taxon>
        <taxon>Duplodnaviria</taxon>
        <taxon>Heunggongvirae</taxon>
        <taxon>Peploviricota</taxon>
        <taxon>Herviviricetes</taxon>
        <taxon>Herpesvirales</taxon>
        <taxon>Malacoherpesviridae</taxon>
        <taxon>Ostreavirus</taxon>
        <taxon>Ostreavirus ostreidmalaco1</taxon>
        <taxon>Ostreid herpesvirus 1</taxon>
    </lineage>
</organism>
<feature type="chain" id="PRO_0000385088" description="Uncharacterized protein ORF64">
    <location>
        <begin position="1"/>
        <end position="398"/>
    </location>
</feature>
<proteinExistence type="predicted"/>
<gene>
    <name type="ORF">ORF64</name>
</gene>
<accession>Q6R7G3</accession>
<sequence length="398" mass="46563">MASINEFIQKYQAIQKDFEEIIENPDWRAECRKKKINVVSKGKKVNFKYDNRCKLKTAWTRSCRGVCVEFDTETGKPIRKPIYSFNKFDNRHNEPDFYNNLLECEAVVLANKFDGSFVRIWYDGVEEKFVTATLGTLSADDKFLVAETMMDQRIARHLKGNPYDCLLAELITPKNIIVTDYNGKSFLTPLSIVSHVDGLPRWSTLRKVVPDMFMENGLPYYCRFTTIETLENDLKEFEQMTIDNPDVYGRIPEGVCVYQCSLKDGLVDVATPMSKIKRDEYVSVHGKPSGKKEEKSKPPAILGRAVTDPKFLQQHAILKFIYDDIEEKTEDEFFMVLENWYENYKTIDRDTNVKKELFGKKDHDKYGRTFRDLLLEIDNKGRTKLEQFFCRYGPQWYQ</sequence>
<name>Y064_OSHVF</name>
<organismHost>
    <name type="scientific">Magallana gigas</name>
    <name type="common">Pacific oyster</name>
    <name type="synonym">Crassostrea gigas</name>
    <dbReference type="NCBI Taxonomy" id="29159"/>
</organismHost>
<organismHost>
    <name type="scientific">Pecten maximus</name>
    <name type="common">King scallop</name>
    <name type="synonym">Pilgrim's clam</name>
    <dbReference type="NCBI Taxonomy" id="6579"/>
</organismHost>
<keyword id="KW-1185">Reference proteome</keyword>
<reference key="1">
    <citation type="journal article" date="2005" name="J. Gen. Virol.">
        <title>A novel class of herpesvirus with bivalve hosts.</title>
        <authorList>
            <person name="Davison A.J."/>
            <person name="Trus B.L."/>
            <person name="Cheng N."/>
            <person name="Steven A.C."/>
            <person name="Watson M.S."/>
            <person name="Cunningham C."/>
            <person name="Le Deuff R.M."/>
            <person name="Renault T."/>
        </authorList>
    </citation>
    <scope>NUCLEOTIDE SEQUENCE [LARGE SCALE GENOMIC DNA]</scope>
</reference>
<protein>
    <recommendedName>
        <fullName>Uncharacterized protein ORF64</fullName>
    </recommendedName>
</protein>